<organism>
    <name type="scientific">Bradyrhizobium sp. (strain BTAi1 / ATCC BAA-1182)</name>
    <dbReference type="NCBI Taxonomy" id="288000"/>
    <lineage>
        <taxon>Bacteria</taxon>
        <taxon>Pseudomonadati</taxon>
        <taxon>Pseudomonadota</taxon>
        <taxon>Alphaproteobacteria</taxon>
        <taxon>Hyphomicrobiales</taxon>
        <taxon>Nitrobacteraceae</taxon>
        <taxon>Bradyrhizobium</taxon>
    </lineage>
</organism>
<accession>A5ELM6</accession>
<dbReference type="EMBL" id="CP000494">
    <property type="protein sequence ID" value="ABQ37070.1"/>
    <property type="molecule type" value="Genomic_DNA"/>
</dbReference>
<dbReference type="RefSeq" id="WP_012045044.1">
    <property type="nucleotide sequence ID" value="NC_009485.1"/>
</dbReference>
<dbReference type="SMR" id="A5ELM6"/>
<dbReference type="STRING" id="288000.BBta_5069"/>
<dbReference type="KEGG" id="bbt:BBta_5069"/>
<dbReference type="eggNOG" id="COG0088">
    <property type="taxonomic scope" value="Bacteria"/>
</dbReference>
<dbReference type="HOGENOM" id="CLU_041575_5_1_5"/>
<dbReference type="OrthoDB" id="9803201at2"/>
<dbReference type="Proteomes" id="UP000000246">
    <property type="component" value="Chromosome"/>
</dbReference>
<dbReference type="GO" id="GO:1990904">
    <property type="term" value="C:ribonucleoprotein complex"/>
    <property type="evidence" value="ECO:0007669"/>
    <property type="project" value="UniProtKB-KW"/>
</dbReference>
<dbReference type="GO" id="GO:0005840">
    <property type="term" value="C:ribosome"/>
    <property type="evidence" value="ECO:0007669"/>
    <property type="project" value="UniProtKB-KW"/>
</dbReference>
<dbReference type="GO" id="GO:0019843">
    <property type="term" value="F:rRNA binding"/>
    <property type="evidence" value="ECO:0007669"/>
    <property type="project" value="UniProtKB-UniRule"/>
</dbReference>
<dbReference type="GO" id="GO:0003735">
    <property type="term" value="F:structural constituent of ribosome"/>
    <property type="evidence" value="ECO:0007669"/>
    <property type="project" value="InterPro"/>
</dbReference>
<dbReference type="GO" id="GO:0006412">
    <property type="term" value="P:translation"/>
    <property type="evidence" value="ECO:0007669"/>
    <property type="project" value="UniProtKB-UniRule"/>
</dbReference>
<dbReference type="FunFam" id="3.40.1370.10:FF:000017">
    <property type="entry name" value="50S ribosomal protein L4"/>
    <property type="match status" value="1"/>
</dbReference>
<dbReference type="Gene3D" id="3.40.1370.10">
    <property type="match status" value="1"/>
</dbReference>
<dbReference type="HAMAP" id="MF_01328_B">
    <property type="entry name" value="Ribosomal_uL4_B"/>
    <property type="match status" value="1"/>
</dbReference>
<dbReference type="InterPro" id="IPR002136">
    <property type="entry name" value="Ribosomal_uL4"/>
</dbReference>
<dbReference type="InterPro" id="IPR013005">
    <property type="entry name" value="Ribosomal_uL4-like"/>
</dbReference>
<dbReference type="InterPro" id="IPR023574">
    <property type="entry name" value="Ribosomal_uL4_dom_sf"/>
</dbReference>
<dbReference type="NCBIfam" id="TIGR03953">
    <property type="entry name" value="rplD_bact"/>
    <property type="match status" value="1"/>
</dbReference>
<dbReference type="PANTHER" id="PTHR10746">
    <property type="entry name" value="50S RIBOSOMAL PROTEIN L4"/>
    <property type="match status" value="1"/>
</dbReference>
<dbReference type="PANTHER" id="PTHR10746:SF6">
    <property type="entry name" value="LARGE RIBOSOMAL SUBUNIT PROTEIN UL4M"/>
    <property type="match status" value="1"/>
</dbReference>
<dbReference type="Pfam" id="PF00573">
    <property type="entry name" value="Ribosomal_L4"/>
    <property type="match status" value="1"/>
</dbReference>
<dbReference type="SUPFAM" id="SSF52166">
    <property type="entry name" value="Ribosomal protein L4"/>
    <property type="match status" value="1"/>
</dbReference>
<feature type="chain" id="PRO_1000052360" description="Large ribosomal subunit protein uL4">
    <location>
        <begin position="1"/>
        <end position="206"/>
    </location>
</feature>
<proteinExistence type="inferred from homology"/>
<reference key="1">
    <citation type="journal article" date="2007" name="Science">
        <title>Legumes symbioses: absence of nod genes in photosynthetic bradyrhizobia.</title>
        <authorList>
            <person name="Giraud E."/>
            <person name="Moulin L."/>
            <person name="Vallenet D."/>
            <person name="Barbe V."/>
            <person name="Cytryn E."/>
            <person name="Avarre J.-C."/>
            <person name="Jaubert M."/>
            <person name="Simon D."/>
            <person name="Cartieaux F."/>
            <person name="Prin Y."/>
            <person name="Bena G."/>
            <person name="Hannibal L."/>
            <person name="Fardoux J."/>
            <person name="Kojadinovic M."/>
            <person name="Vuillet L."/>
            <person name="Lajus A."/>
            <person name="Cruveiller S."/>
            <person name="Rouy Z."/>
            <person name="Mangenot S."/>
            <person name="Segurens B."/>
            <person name="Dossat C."/>
            <person name="Franck W.L."/>
            <person name="Chang W.-S."/>
            <person name="Saunders E."/>
            <person name="Bruce D."/>
            <person name="Richardson P."/>
            <person name="Normand P."/>
            <person name="Dreyfus B."/>
            <person name="Pignol D."/>
            <person name="Stacey G."/>
            <person name="Emerich D."/>
            <person name="Vermeglio A."/>
            <person name="Medigue C."/>
            <person name="Sadowsky M."/>
        </authorList>
    </citation>
    <scope>NUCLEOTIDE SEQUENCE [LARGE SCALE GENOMIC DNA]</scope>
    <source>
        <strain>BTAi1 / ATCC BAA-1182</strain>
    </source>
</reference>
<gene>
    <name evidence="1" type="primary">rplD</name>
    <name type="ordered locus">BBta_5069</name>
</gene>
<protein>
    <recommendedName>
        <fullName evidence="1">Large ribosomal subunit protein uL4</fullName>
    </recommendedName>
    <alternativeName>
        <fullName evidence="2">50S ribosomal protein L4</fullName>
    </alternativeName>
</protein>
<keyword id="KW-1185">Reference proteome</keyword>
<keyword id="KW-0687">Ribonucleoprotein</keyword>
<keyword id="KW-0689">Ribosomal protein</keyword>
<keyword id="KW-0694">RNA-binding</keyword>
<keyword id="KW-0699">rRNA-binding</keyword>
<sequence>MELKVTTLEGKDAGSVQLSDAIFGLEPRVDIIQRCVQWQLNKRQAGTHKAKGRAEIWRTGKKMYKQKGTGGARHGSARVPQFRGGGRAFGPVVRSHATDLPKKVRALALKHALSAKAKDGDLVVLENATLEAAKTKALIGHFSGLGLTNALIIDGAELHNGFAAAARNIPNLDVLPIQGINVYDILRRQKLVLTKAAIDALEARFK</sequence>
<evidence type="ECO:0000255" key="1">
    <source>
        <dbReference type="HAMAP-Rule" id="MF_01328"/>
    </source>
</evidence>
<evidence type="ECO:0000305" key="2"/>
<comment type="function">
    <text evidence="1">One of the primary rRNA binding proteins, this protein initially binds near the 5'-end of the 23S rRNA. It is important during the early stages of 50S assembly. It makes multiple contacts with different domains of the 23S rRNA in the assembled 50S subunit and ribosome.</text>
</comment>
<comment type="function">
    <text evidence="1">Forms part of the polypeptide exit tunnel.</text>
</comment>
<comment type="subunit">
    <text evidence="1">Part of the 50S ribosomal subunit.</text>
</comment>
<comment type="similarity">
    <text evidence="1">Belongs to the universal ribosomal protein uL4 family.</text>
</comment>
<name>RL4_BRASB</name>